<proteinExistence type="inferred from homology"/>
<organism>
    <name type="scientific">Streptococcus mutans serotype c (strain ATCC 700610 / UA159)</name>
    <dbReference type="NCBI Taxonomy" id="210007"/>
    <lineage>
        <taxon>Bacteria</taxon>
        <taxon>Bacillati</taxon>
        <taxon>Bacillota</taxon>
        <taxon>Bacilli</taxon>
        <taxon>Lactobacillales</taxon>
        <taxon>Streptococcaceae</taxon>
        <taxon>Streptococcus</taxon>
    </lineage>
</organism>
<feature type="chain" id="PRO_0000376707" description="2,3,4,5-tetrahydropyridine-2,6-dicarboxylate N-acetyltransferase">
    <location>
        <begin position="1"/>
        <end position="232"/>
    </location>
</feature>
<comment type="function">
    <text evidence="1">Catalyzes the transfer of an acetyl group from acetyl-CoA to tetrahydrodipicolinate.</text>
</comment>
<comment type="catalytic activity">
    <reaction evidence="1">
        <text>(S)-2,3,4,5-tetrahydrodipicolinate + acetyl-CoA + H2O = L-2-acetamido-6-oxoheptanedioate + CoA</text>
        <dbReference type="Rhea" id="RHEA:13085"/>
        <dbReference type="ChEBI" id="CHEBI:15377"/>
        <dbReference type="ChEBI" id="CHEBI:16845"/>
        <dbReference type="ChEBI" id="CHEBI:57287"/>
        <dbReference type="ChEBI" id="CHEBI:57288"/>
        <dbReference type="ChEBI" id="CHEBI:58117"/>
        <dbReference type="EC" id="2.3.1.89"/>
    </reaction>
</comment>
<comment type="pathway">
    <text evidence="1">Amino-acid biosynthesis; L-lysine biosynthesis via DAP pathway; LL-2,6-diaminopimelate from (S)-tetrahydrodipicolinate (acetylase route): step 1/3.</text>
</comment>
<comment type="similarity">
    <text evidence="1">Belongs to the transferase hexapeptide repeat family. DapH subfamily.</text>
</comment>
<reference key="1">
    <citation type="journal article" date="2002" name="Proc. Natl. Acad. Sci. U.S.A.">
        <title>Genome sequence of Streptococcus mutans UA159, a cariogenic dental pathogen.</title>
        <authorList>
            <person name="Ajdic D.J."/>
            <person name="McShan W.M."/>
            <person name="McLaughlin R.E."/>
            <person name="Savic G."/>
            <person name="Chang J."/>
            <person name="Carson M.B."/>
            <person name="Primeaux C."/>
            <person name="Tian R."/>
            <person name="Kenton S."/>
            <person name="Jia H.G."/>
            <person name="Lin S.P."/>
            <person name="Qian Y."/>
            <person name="Li S."/>
            <person name="Zhu H."/>
            <person name="Najar F.Z."/>
            <person name="Lai H."/>
            <person name="White J."/>
            <person name="Roe B.A."/>
            <person name="Ferretti J.J."/>
        </authorList>
    </citation>
    <scope>NUCLEOTIDE SEQUENCE [LARGE SCALE GENOMIC DNA]</scope>
    <source>
        <strain>ATCC 700610 / UA159</strain>
    </source>
</reference>
<gene>
    <name evidence="1" type="primary">dapH</name>
    <name type="ordered locus">SMU_317</name>
</gene>
<accession>Q8DVY7</accession>
<evidence type="ECO:0000255" key="1">
    <source>
        <dbReference type="HAMAP-Rule" id="MF_01691"/>
    </source>
</evidence>
<sequence length="232" mass="24107">MTAQKMSAQEIIAFIGNAEKKTNVKVTFEGALAAALPENVVKLGNVLFGDWKDIEPLLANLTENKDYVVEQDGRNSAVPLLDKRNINARIEPGAIIRDQVTIEDNAVVMMGAIINIGAEIGEGTMIDMGAILGGRATVGKNSHIGAGAVLAGVIEPASADPVRIGDNVLVGANAVIIEGVQVGSGSVVAAGAIVTQDVPDNVVVAGVPARVIKEIDEKTQQKTALEDALRNL</sequence>
<keyword id="KW-0012">Acyltransferase</keyword>
<keyword id="KW-0028">Amino-acid biosynthesis</keyword>
<keyword id="KW-0220">Diaminopimelate biosynthesis</keyword>
<keyword id="KW-0457">Lysine biosynthesis</keyword>
<keyword id="KW-1185">Reference proteome</keyword>
<keyword id="KW-0677">Repeat</keyword>
<keyword id="KW-0808">Transferase</keyword>
<name>DAPH_STRMU</name>
<dbReference type="EC" id="2.3.1.89" evidence="1"/>
<dbReference type="EMBL" id="AE014133">
    <property type="protein sequence ID" value="AAN58078.1"/>
    <property type="molecule type" value="Genomic_DNA"/>
</dbReference>
<dbReference type="RefSeq" id="NP_720772.1">
    <property type="nucleotide sequence ID" value="NC_004350.2"/>
</dbReference>
<dbReference type="SMR" id="Q8DVY7"/>
<dbReference type="STRING" id="210007.SMU_317"/>
<dbReference type="KEGG" id="smu:SMU_317"/>
<dbReference type="PATRIC" id="fig|210007.7.peg.274"/>
<dbReference type="eggNOG" id="COG2171">
    <property type="taxonomic scope" value="Bacteria"/>
</dbReference>
<dbReference type="HOGENOM" id="CLU_103751_0_0_9"/>
<dbReference type="OrthoDB" id="9788080at2"/>
<dbReference type="PhylomeDB" id="Q8DVY7"/>
<dbReference type="UniPathway" id="UPA00034">
    <property type="reaction ID" value="UER00022"/>
</dbReference>
<dbReference type="Proteomes" id="UP000002512">
    <property type="component" value="Chromosome"/>
</dbReference>
<dbReference type="GO" id="GO:0047200">
    <property type="term" value="F:tetrahydrodipicolinate N-acetyltransferase activity"/>
    <property type="evidence" value="ECO:0007669"/>
    <property type="project" value="UniProtKB-EC"/>
</dbReference>
<dbReference type="GO" id="GO:0019877">
    <property type="term" value="P:diaminopimelate biosynthetic process"/>
    <property type="evidence" value="ECO:0007669"/>
    <property type="project" value="UniProtKB-UniRule"/>
</dbReference>
<dbReference type="GO" id="GO:0009089">
    <property type="term" value="P:lysine biosynthetic process via diaminopimelate"/>
    <property type="evidence" value="ECO:0007669"/>
    <property type="project" value="UniProtKB-UniRule"/>
</dbReference>
<dbReference type="Gene3D" id="2.160.10.10">
    <property type="entry name" value="Hexapeptide repeat proteins"/>
    <property type="match status" value="1"/>
</dbReference>
<dbReference type="Gene3D" id="3.30.70.250">
    <property type="entry name" value="Malonyl-CoA ACP transacylase, ACP-binding"/>
    <property type="match status" value="1"/>
</dbReference>
<dbReference type="HAMAP" id="MF_01691">
    <property type="entry name" value="DapH"/>
    <property type="match status" value="1"/>
</dbReference>
<dbReference type="InterPro" id="IPR019873">
    <property type="entry name" value="DapH"/>
</dbReference>
<dbReference type="InterPro" id="IPR013710">
    <property type="entry name" value="DapH_N"/>
</dbReference>
<dbReference type="InterPro" id="IPR001451">
    <property type="entry name" value="Hexapep"/>
</dbReference>
<dbReference type="InterPro" id="IPR018357">
    <property type="entry name" value="Hexapep_transf_CS"/>
</dbReference>
<dbReference type="InterPro" id="IPR050179">
    <property type="entry name" value="Trans_hexapeptide_repeat"/>
</dbReference>
<dbReference type="InterPro" id="IPR011004">
    <property type="entry name" value="Trimer_LpxA-like_sf"/>
</dbReference>
<dbReference type="NCBIfam" id="TIGR03532">
    <property type="entry name" value="DapD_Ac"/>
    <property type="match status" value="1"/>
</dbReference>
<dbReference type="PANTHER" id="PTHR43300:SF10">
    <property type="entry name" value="2,3,4,5-TETRAHYDROPYRIDINE-2,6-DICARBOXYLATE N-ACETYLTRANSFERASE"/>
    <property type="match status" value="1"/>
</dbReference>
<dbReference type="PANTHER" id="PTHR43300">
    <property type="entry name" value="ACETYLTRANSFERASE"/>
    <property type="match status" value="1"/>
</dbReference>
<dbReference type="Pfam" id="PF08503">
    <property type="entry name" value="DapH_N"/>
    <property type="match status" value="1"/>
</dbReference>
<dbReference type="Pfam" id="PF00132">
    <property type="entry name" value="Hexapep"/>
    <property type="match status" value="1"/>
</dbReference>
<dbReference type="Pfam" id="PF14602">
    <property type="entry name" value="Hexapep_2"/>
    <property type="match status" value="1"/>
</dbReference>
<dbReference type="SUPFAM" id="SSF51161">
    <property type="entry name" value="Trimeric LpxA-like enzymes"/>
    <property type="match status" value="1"/>
</dbReference>
<dbReference type="PROSITE" id="PS00101">
    <property type="entry name" value="HEXAPEP_TRANSFERASES"/>
    <property type="match status" value="2"/>
</dbReference>
<protein>
    <recommendedName>
        <fullName evidence="1">2,3,4,5-tetrahydropyridine-2,6-dicarboxylate N-acetyltransferase</fullName>
        <ecNumber evidence="1">2.3.1.89</ecNumber>
    </recommendedName>
    <alternativeName>
        <fullName evidence="1">Tetrahydrodipicolinate N-acetyltransferase</fullName>
        <shortName evidence="1">THP acetyltransferase</shortName>
        <shortName evidence="1">Tetrahydropicolinate acetylase</shortName>
    </alternativeName>
</protein>